<organism>
    <name type="scientific">Oryza sativa subsp. japonica</name>
    <name type="common">Rice</name>
    <dbReference type="NCBI Taxonomy" id="39947"/>
    <lineage>
        <taxon>Eukaryota</taxon>
        <taxon>Viridiplantae</taxon>
        <taxon>Streptophyta</taxon>
        <taxon>Embryophyta</taxon>
        <taxon>Tracheophyta</taxon>
        <taxon>Spermatophyta</taxon>
        <taxon>Magnoliopsida</taxon>
        <taxon>Liliopsida</taxon>
        <taxon>Poales</taxon>
        <taxon>Poaceae</taxon>
        <taxon>BOP clade</taxon>
        <taxon>Oryzoideae</taxon>
        <taxon>Oryzeae</taxon>
        <taxon>Oryzinae</taxon>
        <taxon>Oryza</taxon>
        <taxon>Oryza sativa</taxon>
    </lineage>
</organism>
<reference key="1">
    <citation type="journal article" date="2005" name="Mol. Genet. Genomics">
        <title>A fine physical map of the rice chromosome 5.</title>
        <authorList>
            <person name="Cheng C.-H."/>
            <person name="Chung M.C."/>
            <person name="Liu S.-M."/>
            <person name="Chen S.-K."/>
            <person name="Kao F.Y."/>
            <person name="Lin S.-J."/>
            <person name="Hsiao S.-H."/>
            <person name="Tseng I.C."/>
            <person name="Hsing Y.-I.C."/>
            <person name="Wu H.-P."/>
            <person name="Chen C.-S."/>
            <person name="Shaw J.-F."/>
            <person name="Wu J."/>
            <person name="Matsumoto T."/>
            <person name="Sasaki T."/>
            <person name="Chen H.-C."/>
            <person name="Chow T.-Y."/>
        </authorList>
    </citation>
    <scope>NUCLEOTIDE SEQUENCE [LARGE SCALE GENOMIC DNA]</scope>
    <source>
        <strain>cv. Nipponbare</strain>
    </source>
</reference>
<reference key="2">
    <citation type="journal article" date="2005" name="Nature">
        <title>The map-based sequence of the rice genome.</title>
        <authorList>
            <consortium name="International rice genome sequencing project (IRGSP)"/>
        </authorList>
    </citation>
    <scope>NUCLEOTIDE SEQUENCE [LARGE SCALE GENOMIC DNA]</scope>
    <source>
        <strain>cv. Nipponbare</strain>
    </source>
</reference>
<reference key="3">
    <citation type="journal article" date="2008" name="Nucleic Acids Res.">
        <title>The rice annotation project database (RAP-DB): 2008 update.</title>
        <authorList>
            <consortium name="The rice annotation project (RAP)"/>
        </authorList>
    </citation>
    <scope>GENOME REANNOTATION</scope>
    <source>
        <strain>cv. Nipponbare</strain>
    </source>
</reference>
<reference key="4">
    <citation type="journal article" date="2013" name="Rice">
        <title>Improvement of the Oryza sativa Nipponbare reference genome using next generation sequence and optical map data.</title>
        <authorList>
            <person name="Kawahara Y."/>
            <person name="de la Bastide M."/>
            <person name="Hamilton J.P."/>
            <person name="Kanamori H."/>
            <person name="McCombie W.R."/>
            <person name="Ouyang S."/>
            <person name="Schwartz D.C."/>
            <person name="Tanaka T."/>
            <person name="Wu J."/>
            <person name="Zhou S."/>
            <person name="Childs K.L."/>
            <person name="Davidson R.M."/>
            <person name="Lin H."/>
            <person name="Quesada-Ocampo L."/>
            <person name="Vaillancourt B."/>
            <person name="Sakai H."/>
            <person name="Lee S.S."/>
            <person name="Kim J."/>
            <person name="Numa H."/>
            <person name="Itoh T."/>
            <person name="Buell C.R."/>
            <person name="Matsumoto T."/>
        </authorList>
    </citation>
    <scope>GENOME REANNOTATION</scope>
    <source>
        <strain>cv. Nipponbare</strain>
    </source>
</reference>
<reference key="5">
    <citation type="journal article" date="2005" name="PLoS Biol.">
        <title>The genomes of Oryza sativa: a history of duplications.</title>
        <authorList>
            <person name="Yu J."/>
            <person name="Wang J."/>
            <person name="Lin W."/>
            <person name="Li S."/>
            <person name="Li H."/>
            <person name="Zhou J."/>
            <person name="Ni P."/>
            <person name="Dong W."/>
            <person name="Hu S."/>
            <person name="Zeng C."/>
            <person name="Zhang J."/>
            <person name="Zhang Y."/>
            <person name="Li R."/>
            <person name="Xu Z."/>
            <person name="Li S."/>
            <person name="Li X."/>
            <person name="Zheng H."/>
            <person name="Cong L."/>
            <person name="Lin L."/>
            <person name="Yin J."/>
            <person name="Geng J."/>
            <person name="Li G."/>
            <person name="Shi J."/>
            <person name="Liu J."/>
            <person name="Lv H."/>
            <person name="Li J."/>
            <person name="Wang J."/>
            <person name="Deng Y."/>
            <person name="Ran L."/>
            <person name="Shi X."/>
            <person name="Wang X."/>
            <person name="Wu Q."/>
            <person name="Li C."/>
            <person name="Ren X."/>
            <person name="Wang J."/>
            <person name="Wang X."/>
            <person name="Li D."/>
            <person name="Liu D."/>
            <person name="Zhang X."/>
            <person name="Ji Z."/>
            <person name="Zhao W."/>
            <person name="Sun Y."/>
            <person name="Zhang Z."/>
            <person name="Bao J."/>
            <person name="Han Y."/>
            <person name="Dong L."/>
            <person name="Ji J."/>
            <person name="Chen P."/>
            <person name="Wu S."/>
            <person name="Liu J."/>
            <person name="Xiao Y."/>
            <person name="Bu D."/>
            <person name="Tan J."/>
            <person name="Yang L."/>
            <person name="Ye C."/>
            <person name="Zhang J."/>
            <person name="Xu J."/>
            <person name="Zhou Y."/>
            <person name="Yu Y."/>
            <person name="Zhang B."/>
            <person name="Zhuang S."/>
            <person name="Wei H."/>
            <person name="Liu B."/>
            <person name="Lei M."/>
            <person name="Yu H."/>
            <person name="Li Y."/>
            <person name="Xu H."/>
            <person name="Wei S."/>
            <person name="He X."/>
            <person name="Fang L."/>
            <person name="Zhang Z."/>
            <person name="Zhang Y."/>
            <person name="Huang X."/>
            <person name="Su Z."/>
            <person name="Tong W."/>
            <person name="Li J."/>
            <person name="Tong Z."/>
            <person name="Li S."/>
            <person name="Ye J."/>
            <person name="Wang L."/>
            <person name="Fang L."/>
            <person name="Lei T."/>
            <person name="Chen C.-S."/>
            <person name="Chen H.-C."/>
            <person name="Xu Z."/>
            <person name="Li H."/>
            <person name="Huang H."/>
            <person name="Zhang F."/>
            <person name="Xu H."/>
            <person name="Li N."/>
            <person name="Zhao C."/>
            <person name="Li S."/>
            <person name="Dong L."/>
            <person name="Huang Y."/>
            <person name="Li L."/>
            <person name="Xi Y."/>
            <person name="Qi Q."/>
            <person name="Li W."/>
            <person name="Zhang B."/>
            <person name="Hu W."/>
            <person name="Zhang Y."/>
            <person name="Tian X."/>
            <person name="Jiao Y."/>
            <person name="Liang X."/>
            <person name="Jin J."/>
            <person name="Gao L."/>
            <person name="Zheng W."/>
            <person name="Hao B."/>
            <person name="Liu S.-M."/>
            <person name="Wang W."/>
            <person name="Yuan L."/>
            <person name="Cao M."/>
            <person name="McDermott J."/>
            <person name="Samudrala R."/>
            <person name="Wang J."/>
            <person name="Wong G.K.-S."/>
            <person name="Yang H."/>
        </authorList>
    </citation>
    <scope>NUCLEOTIDE SEQUENCE [LARGE SCALE GENOMIC DNA]</scope>
    <source>
        <strain>cv. Nipponbare</strain>
    </source>
</reference>
<reference key="6">
    <citation type="journal article" date="2003" name="Science">
        <title>Collection, mapping, and annotation of over 28,000 cDNA clones from japonica rice.</title>
        <authorList>
            <consortium name="The rice full-length cDNA consortium"/>
        </authorList>
    </citation>
    <scope>NUCLEOTIDE SEQUENCE [LARGE SCALE MRNA]</scope>
    <source>
        <strain>cv. Nipponbare</strain>
    </source>
</reference>
<reference key="7">
    <citation type="journal article" date="2009" name="Plant J.">
        <title>Arabidopsis ING and Alfin1-like protein families localize to the nucleus and bind to H3K4me3/2 via plant homeodomain fingers.</title>
        <authorList>
            <person name="Lee W.Y."/>
            <person name="Lee D."/>
            <person name="Chung W.I."/>
            <person name="Kwon C.S."/>
        </authorList>
    </citation>
    <scope>GENE FAMILY</scope>
</reference>
<evidence type="ECO:0000250" key="1"/>
<evidence type="ECO:0000255" key="2">
    <source>
        <dbReference type="PROSITE-ProRule" id="PRU00146"/>
    </source>
</evidence>
<evidence type="ECO:0000256" key="3">
    <source>
        <dbReference type="SAM" id="MobiDB-lite"/>
    </source>
</evidence>
<evidence type="ECO:0000305" key="4"/>
<dbReference type="EMBL" id="AC124144">
    <property type="protein sequence ID" value="AAT07656.1"/>
    <property type="molecule type" value="Genomic_DNA"/>
</dbReference>
<dbReference type="EMBL" id="AP008211">
    <property type="protein sequence ID" value="BAF16647.1"/>
    <property type="molecule type" value="Genomic_DNA"/>
</dbReference>
<dbReference type="EMBL" id="AP014961">
    <property type="protein sequence ID" value="BAS92420.1"/>
    <property type="molecule type" value="Genomic_DNA"/>
</dbReference>
<dbReference type="EMBL" id="CM000142">
    <property type="protein sequence ID" value="EEE62436.1"/>
    <property type="molecule type" value="Genomic_DNA"/>
</dbReference>
<dbReference type="EMBL" id="AK071548">
    <property type="protein sequence ID" value="BAG92550.1"/>
    <property type="molecule type" value="mRNA"/>
</dbReference>
<dbReference type="RefSeq" id="XP_015639787.1">
    <property type="nucleotide sequence ID" value="XM_015784301.1"/>
</dbReference>
<dbReference type="SMR" id="Q75IR6"/>
<dbReference type="STRING" id="39947.Q75IR6"/>
<dbReference type="PaxDb" id="39947-Q75IR6"/>
<dbReference type="EnsemblPlants" id="Os05t0163100-02">
    <property type="protein sequence ID" value="Os05t0163100-02"/>
    <property type="gene ID" value="Os05g0163100"/>
</dbReference>
<dbReference type="Gramene" id="Os05t0163100-02">
    <property type="protein sequence ID" value="Os05t0163100-02"/>
    <property type="gene ID" value="Os05g0163100"/>
</dbReference>
<dbReference type="KEGG" id="dosa:Os05g0163100"/>
<dbReference type="eggNOG" id="KOG1632">
    <property type="taxonomic scope" value="Eukaryota"/>
</dbReference>
<dbReference type="HOGENOM" id="CLU_058315_1_0_1"/>
<dbReference type="InParanoid" id="Q75IR6"/>
<dbReference type="OMA" id="RNERYIT"/>
<dbReference type="OrthoDB" id="436852at2759"/>
<dbReference type="Proteomes" id="UP000000763">
    <property type="component" value="Chromosome 5"/>
</dbReference>
<dbReference type="Proteomes" id="UP000007752">
    <property type="component" value="Chromosome 5"/>
</dbReference>
<dbReference type="Proteomes" id="UP000059680">
    <property type="component" value="Chromosome 5"/>
</dbReference>
<dbReference type="ExpressionAtlas" id="Q75IR6">
    <property type="expression patterns" value="baseline and differential"/>
</dbReference>
<dbReference type="GO" id="GO:0005634">
    <property type="term" value="C:nucleus"/>
    <property type="evidence" value="ECO:0000318"/>
    <property type="project" value="GO_Central"/>
</dbReference>
<dbReference type="GO" id="GO:0042393">
    <property type="term" value="F:histone binding"/>
    <property type="evidence" value="ECO:0007669"/>
    <property type="project" value="InterPro"/>
</dbReference>
<dbReference type="GO" id="GO:0000976">
    <property type="term" value="F:transcription cis-regulatory region binding"/>
    <property type="evidence" value="ECO:0000318"/>
    <property type="project" value="GO_Central"/>
</dbReference>
<dbReference type="GO" id="GO:0003712">
    <property type="term" value="F:transcription coregulator activity"/>
    <property type="evidence" value="ECO:0000318"/>
    <property type="project" value="GO_Central"/>
</dbReference>
<dbReference type="GO" id="GO:0008270">
    <property type="term" value="F:zinc ion binding"/>
    <property type="evidence" value="ECO:0007669"/>
    <property type="project" value="UniProtKB-KW"/>
</dbReference>
<dbReference type="GO" id="GO:0006325">
    <property type="term" value="P:chromatin organization"/>
    <property type="evidence" value="ECO:0007669"/>
    <property type="project" value="UniProtKB-KW"/>
</dbReference>
<dbReference type="GO" id="GO:0006355">
    <property type="term" value="P:regulation of DNA-templated transcription"/>
    <property type="evidence" value="ECO:0007669"/>
    <property type="project" value="InterPro"/>
</dbReference>
<dbReference type="CDD" id="cd15613">
    <property type="entry name" value="PHD_AL_plant"/>
    <property type="match status" value="1"/>
</dbReference>
<dbReference type="FunFam" id="3.30.40.10:FF:000306">
    <property type="entry name" value="PHD finger alfin-like protein"/>
    <property type="match status" value="1"/>
</dbReference>
<dbReference type="Gene3D" id="3.30.40.10">
    <property type="entry name" value="Zinc/RING finger domain, C3HC4 (zinc finger)"/>
    <property type="match status" value="1"/>
</dbReference>
<dbReference type="InterPro" id="IPR045104">
    <property type="entry name" value="Alfin"/>
</dbReference>
<dbReference type="InterPro" id="IPR021998">
    <property type="entry name" value="Alfin_N"/>
</dbReference>
<dbReference type="InterPro" id="IPR044104">
    <property type="entry name" value="PHD_AL_plant"/>
</dbReference>
<dbReference type="InterPro" id="IPR019786">
    <property type="entry name" value="Zinc_finger_PHD-type_CS"/>
</dbReference>
<dbReference type="InterPro" id="IPR011011">
    <property type="entry name" value="Znf_FYVE_PHD"/>
</dbReference>
<dbReference type="InterPro" id="IPR001965">
    <property type="entry name" value="Znf_PHD"/>
</dbReference>
<dbReference type="InterPro" id="IPR019787">
    <property type="entry name" value="Znf_PHD-finger"/>
</dbReference>
<dbReference type="InterPro" id="IPR013083">
    <property type="entry name" value="Znf_RING/FYVE/PHD"/>
</dbReference>
<dbReference type="PANTHER" id="PTHR12321">
    <property type="entry name" value="CPG BINDING PROTEIN"/>
    <property type="match status" value="1"/>
</dbReference>
<dbReference type="PANTHER" id="PTHR12321:SF181">
    <property type="entry name" value="PHD FINGER PROTEIN ALFIN-LIKE 1"/>
    <property type="match status" value="1"/>
</dbReference>
<dbReference type="Pfam" id="PF12165">
    <property type="entry name" value="Alfin"/>
    <property type="match status" value="1"/>
</dbReference>
<dbReference type="Pfam" id="PF00628">
    <property type="entry name" value="PHD"/>
    <property type="match status" value="1"/>
</dbReference>
<dbReference type="SMART" id="SM00249">
    <property type="entry name" value="PHD"/>
    <property type="match status" value="1"/>
</dbReference>
<dbReference type="SUPFAM" id="SSF57903">
    <property type="entry name" value="FYVE/PHD zinc finger"/>
    <property type="match status" value="1"/>
</dbReference>
<dbReference type="PROSITE" id="PS01359">
    <property type="entry name" value="ZF_PHD_1"/>
    <property type="match status" value="1"/>
</dbReference>
<dbReference type="PROSITE" id="PS50016">
    <property type="entry name" value="ZF_PHD_2"/>
    <property type="match status" value="1"/>
</dbReference>
<sequence>MDASYRRDGRGGGGGGGGGGSAPRSVEDIFKDFRARRTAILRALTHDVEDFYAQCDPEKENLCLYGYANEAWQVALPAEEVPTELPEPALGINFARDGMNRRDWLALVAVHSDSWLVSVAFYYAARLNRNDRKRLFGMMNDLPTVYEVVSGSRQSKERDRSGMDNSSRNKISSKHTSDVARVENNIKEEDEGYDEDDGDHSETLCGTCGGIYSADEFWIGCDVCERWYHGKCVKITPAKAESIKQYKCPSCSSKRPRQ</sequence>
<name>ALFL1_ORYSJ</name>
<gene>
    <name type="ordered locus">Os05g0163100</name>
    <name type="ordered locus">LOC_Os05g07040</name>
    <name type="ORF">OsJ_17228</name>
    <name type="ORF">OSJNBb0099P06.7</name>
</gene>
<feature type="chain" id="PRO_0000412937" description="PHD finger protein ALFIN-LIKE 1">
    <location>
        <begin position="1"/>
        <end position="258"/>
    </location>
</feature>
<feature type="zinc finger region" description="PHD-type" evidence="2">
    <location>
        <begin position="202"/>
        <end position="254"/>
    </location>
</feature>
<feature type="region of interest" description="Disordered" evidence="3">
    <location>
        <begin position="1"/>
        <end position="24"/>
    </location>
</feature>
<feature type="region of interest" description="Disordered" evidence="3">
    <location>
        <begin position="150"/>
        <end position="200"/>
    </location>
</feature>
<feature type="compositionally biased region" description="Basic and acidic residues" evidence="3">
    <location>
        <begin position="1"/>
        <end position="10"/>
    </location>
</feature>
<feature type="compositionally biased region" description="Gly residues" evidence="3">
    <location>
        <begin position="11"/>
        <end position="21"/>
    </location>
</feature>
<feature type="compositionally biased region" description="Basic and acidic residues" evidence="3">
    <location>
        <begin position="175"/>
        <end position="187"/>
    </location>
</feature>
<feature type="compositionally biased region" description="Acidic residues" evidence="3">
    <location>
        <begin position="188"/>
        <end position="199"/>
    </location>
</feature>
<feature type="site" description="Histone H3K4me3 binding" evidence="1">
    <location>
        <position position="212"/>
    </location>
</feature>
<feature type="site" description="Histone H3K4me3 binding" evidence="1">
    <location>
        <position position="218"/>
    </location>
</feature>
<feature type="site" description="Histone H3K4me3 binding" evidence="1">
    <location>
        <position position="222"/>
    </location>
</feature>
<feature type="site" description="Histone H3K4me3 binding" evidence="1">
    <location>
        <position position="227"/>
    </location>
</feature>
<proteinExistence type="evidence at transcript level"/>
<keyword id="KW-0156">Chromatin regulator</keyword>
<keyword id="KW-0479">Metal-binding</keyword>
<keyword id="KW-0539">Nucleus</keyword>
<keyword id="KW-1185">Reference proteome</keyword>
<keyword id="KW-0804">Transcription</keyword>
<keyword id="KW-0805">Transcription regulation</keyword>
<keyword id="KW-0862">Zinc</keyword>
<keyword id="KW-0863">Zinc-finger</keyword>
<comment type="function">
    <text evidence="1">Histone-binding component that specifically recognizes H3 tails trimethylated on 'Lys-4' (H3K4me3), which mark transcription start sites of virtually all active genes.</text>
</comment>
<comment type="subunit">
    <text evidence="1">Interacts with H3K4me3 and to a lesser extent with H3K4me2.</text>
</comment>
<comment type="subcellular location">
    <subcellularLocation>
        <location evidence="1">Nucleus</location>
    </subcellularLocation>
</comment>
<comment type="domain">
    <text evidence="1">The PHD-type zinc finger mediates the binding to H3K4me3.</text>
</comment>
<comment type="similarity">
    <text evidence="4">Belongs to the Alfin family.</text>
</comment>
<protein>
    <recommendedName>
        <fullName>PHD finger protein ALFIN-LIKE 1</fullName>
    </recommendedName>
</protein>
<accession>Q75IR6</accession>
<accession>A0A0P0WI91</accession>